<comment type="function">
    <text evidence="1">Specifically catalyzes the dephosphorylation of 2-phosphoglycolate. Is involved in the dissimilation of the intracellular 2-phosphoglycolate formed during the DNA repair of 3'-phosphoglycolate ends, a major class of DNA lesions induced by oxidative stress.</text>
</comment>
<comment type="catalytic activity">
    <reaction evidence="1">
        <text>2-phosphoglycolate + H2O = glycolate + phosphate</text>
        <dbReference type="Rhea" id="RHEA:14369"/>
        <dbReference type="ChEBI" id="CHEBI:15377"/>
        <dbReference type="ChEBI" id="CHEBI:29805"/>
        <dbReference type="ChEBI" id="CHEBI:43474"/>
        <dbReference type="ChEBI" id="CHEBI:58033"/>
        <dbReference type="EC" id="3.1.3.18"/>
    </reaction>
</comment>
<comment type="cofactor">
    <cofactor evidence="1">
        <name>Mg(2+)</name>
        <dbReference type="ChEBI" id="CHEBI:18420"/>
    </cofactor>
</comment>
<comment type="cofactor">
    <cofactor evidence="1">
        <name>chloride</name>
        <dbReference type="ChEBI" id="CHEBI:17996"/>
    </cofactor>
</comment>
<comment type="pathway">
    <text evidence="1">Organic acid metabolism; glycolate biosynthesis; glycolate from 2-phosphoglycolate: step 1/1.</text>
</comment>
<comment type="subunit">
    <text evidence="1">Monomer.</text>
</comment>
<comment type="similarity">
    <text evidence="1">Belongs to the HAD-like hydrolase superfamily. CbbY/CbbZ/Gph/YieH family.</text>
</comment>
<organism>
    <name type="scientific">Escherichia coli O157:H7</name>
    <dbReference type="NCBI Taxonomy" id="83334"/>
    <lineage>
        <taxon>Bacteria</taxon>
        <taxon>Pseudomonadati</taxon>
        <taxon>Pseudomonadota</taxon>
        <taxon>Gammaproteobacteria</taxon>
        <taxon>Enterobacterales</taxon>
        <taxon>Enterobacteriaceae</taxon>
        <taxon>Escherichia</taxon>
    </lineage>
</organism>
<feature type="chain" id="PRO_0000108028" description="Phosphoglycolate phosphatase">
    <location>
        <begin position="1"/>
        <end position="252"/>
    </location>
</feature>
<feature type="active site" description="Nucleophile" evidence="1">
    <location>
        <position position="13"/>
    </location>
</feature>
<feature type="binding site" evidence="1">
    <location>
        <position position="13"/>
    </location>
    <ligand>
        <name>Mg(2+)</name>
        <dbReference type="ChEBI" id="CHEBI:18420"/>
    </ligand>
</feature>
<feature type="binding site" evidence="1">
    <location>
        <position position="15"/>
    </location>
    <ligand>
        <name>Mg(2+)</name>
        <dbReference type="ChEBI" id="CHEBI:18420"/>
    </ligand>
</feature>
<feature type="binding site" evidence="1">
    <location>
        <position position="192"/>
    </location>
    <ligand>
        <name>Mg(2+)</name>
        <dbReference type="ChEBI" id="CHEBI:18420"/>
    </ligand>
</feature>
<gene>
    <name evidence="1" type="primary">gph</name>
    <name type="ordered locus">Z4738</name>
    <name type="ordered locus">ECs4227</name>
</gene>
<reference key="1">
    <citation type="journal article" date="2001" name="Nature">
        <title>Genome sequence of enterohaemorrhagic Escherichia coli O157:H7.</title>
        <authorList>
            <person name="Perna N.T."/>
            <person name="Plunkett G. III"/>
            <person name="Burland V."/>
            <person name="Mau B."/>
            <person name="Glasner J.D."/>
            <person name="Rose D.J."/>
            <person name="Mayhew G.F."/>
            <person name="Evans P.S."/>
            <person name="Gregor J."/>
            <person name="Kirkpatrick H.A."/>
            <person name="Posfai G."/>
            <person name="Hackett J."/>
            <person name="Klink S."/>
            <person name="Boutin A."/>
            <person name="Shao Y."/>
            <person name="Miller L."/>
            <person name="Grotbeck E.J."/>
            <person name="Davis N.W."/>
            <person name="Lim A."/>
            <person name="Dimalanta E.T."/>
            <person name="Potamousis K."/>
            <person name="Apodaca J."/>
            <person name="Anantharaman T.S."/>
            <person name="Lin J."/>
            <person name="Yen G."/>
            <person name="Schwartz D.C."/>
            <person name="Welch R.A."/>
            <person name="Blattner F.R."/>
        </authorList>
    </citation>
    <scope>NUCLEOTIDE SEQUENCE [LARGE SCALE GENOMIC DNA]</scope>
    <source>
        <strain>O157:H7 / EDL933 / ATCC 700927 / EHEC</strain>
    </source>
</reference>
<reference key="2">
    <citation type="journal article" date="2001" name="DNA Res.">
        <title>Complete genome sequence of enterohemorrhagic Escherichia coli O157:H7 and genomic comparison with a laboratory strain K-12.</title>
        <authorList>
            <person name="Hayashi T."/>
            <person name="Makino K."/>
            <person name="Ohnishi M."/>
            <person name="Kurokawa K."/>
            <person name="Ishii K."/>
            <person name="Yokoyama K."/>
            <person name="Han C.-G."/>
            <person name="Ohtsubo E."/>
            <person name="Nakayama K."/>
            <person name="Murata T."/>
            <person name="Tanaka M."/>
            <person name="Tobe T."/>
            <person name="Iida T."/>
            <person name="Takami H."/>
            <person name="Honda T."/>
            <person name="Sasakawa C."/>
            <person name="Ogasawara N."/>
            <person name="Yasunaga T."/>
            <person name="Kuhara S."/>
            <person name="Shiba T."/>
            <person name="Hattori M."/>
            <person name="Shinagawa H."/>
        </authorList>
    </citation>
    <scope>NUCLEOTIDE SEQUENCE [LARGE SCALE GENOMIC DNA]</scope>
    <source>
        <strain>O157:H7 / Sakai / RIMD 0509952 / EHEC</strain>
    </source>
</reference>
<name>GPH_ECO57</name>
<protein>
    <recommendedName>
        <fullName evidence="1">Phosphoglycolate phosphatase</fullName>
        <shortName evidence="1">PGP</shortName>
        <shortName evidence="1">PGPase</shortName>
        <ecNumber evidence="1">3.1.3.18</ecNumber>
    </recommendedName>
</protein>
<proteinExistence type="inferred from homology"/>
<evidence type="ECO:0000255" key="1">
    <source>
        <dbReference type="HAMAP-Rule" id="MF_00495"/>
    </source>
</evidence>
<keyword id="KW-0119">Carbohydrate metabolism</keyword>
<keyword id="KW-0868">Chloride</keyword>
<keyword id="KW-0378">Hydrolase</keyword>
<keyword id="KW-0460">Magnesium</keyword>
<keyword id="KW-0479">Metal-binding</keyword>
<keyword id="KW-1185">Reference proteome</keyword>
<dbReference type="EC" id="3.1.3.18" evidence="1"/>
<dbReference type="EMBL" id="AE005174">
    <property type="protein sequence ID" value="AAG58485.1"/>
    <property type="molecule type" value="Genomic_DNA"/>
</dbReference>
<dbReference type="EMBL" id="BA000007">
    <property type="protein sequence ID" value="BAB37650.1"/>
    <property type="molecule type" value="Genomic_DNA"/>
</dbReference>
<dbReference type="PIR" id="A86003">
    <property type="entry name" value="A86003"/>
</dbReference>
<dbReference type="PIR" id="C91157">
    <property type="entry name" value="C91157"/>
</dbReference>
<dbReference type="RefSeq" id="NP_312254.1">
    <property type="nucleotide sequence ID" value="NC_002695.1"/>
</dbReference>
<dbReference type="RefSeq" id="WP_000032691.1">
    <property type="nucleotide sequence ID" value="NZ_VOAI01000004.1"/>
</dbReference>
<dbReference type="SMR" id="P58422"/>
<dbReference type="STRING" id="155864.Z4738"/>
<dbReference type="KEGG" id="ece:Z4738"/>
<dbReference type="KEGG" id="ecs:ECs_4227"/>
<dbReference type="PATRIC" id="fig|386585.9.peg.4413"/>
<dbReference type="eggNOG" id="COG0546">
    <property type="taxonomic scope" value="Bacteria"/>
</dbReference>
<dbReference type="HOGENOM" id="CLU_045011_19_1_6"/>
<dbReference type="OMA" id="YLCGKFG"/>
<dbReference type="UniPathway" id="UPA00865">
    <property type="reaction ID" value="UER00834"/>
</dbReference>
<dbReference type="Proteomes" id="UP000000558">
    <property type="component" value="Chromosome"/>
</dbReference>
<dbReference type="Proteomes" id="UP000002519">
    <property type="component" value="Chromosome"/>
</dbReference>
<dbReference type="GO" id="GO:0005829">
    <property type="term" value="C:cytosol"/>
    <property type="evidence" value="ECO:0007669"/>
    <property type="project" value="TreeGrafter"/>
</dbReference>
<dbReference type="GO" id="GO:0046872">
    <property type="term" value="F:metal ion binding"/>
    <property type="evidence" value="ECO:0007669"/>
    <property type="project" value="UniProtKB-KW"/>
</dbReference>
<dbReference type="GO" id="GO:0008967">
    <property type="term" value="F:phosphoglycolate phosphatase activity"/>
    <property type="evidence" value="ECO:0007669"/>
    <property type="project" value="UniProtKB-UniRule"/>
</dbReference>
<dbReference type="GO" id="GO:0005975">
    <property type="term" value="P:carbohydrate metabolic process"/>
    <property type="evidence" value="ECO:0007669"/>
    <property type="project" value="InterPro"/>
</dbReference>
<dbReference type="GO" id="GO:0006281">
    <property type="term" value="P:DNA repair"/>
    <property type="evidence" value="ECO:0007669"/>
    <property type="project" value="TreeGrafter"/>
</dbReference>
<dbReference type="GO" id="GO:0046295">
    <property type="term" value="P:glycolate biosynthetic process"/>
    <property type="evidence" value="ECO:0007669"/>
    <property type="project" value="UniProtKB-UniRule"/>
</dbReference>
<dbReference type="CDD" id="cd16417">
    <property type="entry name" value="HAD_PGPase"/>
    <property type="match status" value="1"/>
</dbReference>
<dbReference type="FunFam" id="1.10.150.240:FF:000003">
    <property type="entry name" value="Phosphoglycolate phosphatase"/>
    <property type="match status" value="1"/>
</dbReference>
<dbReference type="FunFam" id="3.40.50.1000:FF:000022">
    <property type="entry name" value="Phosphoglycolate phosphatase"/>
    <property type="match status" value="1"/>
</dbReference>
<dbReference type="Gene3D" id="3.40.50.1000">
    <property type="entry name" value="HAD superfamily/HAD-like"/>
    <property type="match status" value="1"/>
</dbReference>
<dbReference type="Gene3D" id="1.10.150.240">
    <property type="entry name" value="Putative phosphatase, domain 2"/>
    <property type="match status" value="1"/>
</dbReference>
<dbReference type="HAMAP" id="MF_00495">
    <property type="entry name" value="GPH_hydrolase_bact"/>
    <property type="match status" value="1"/>
</dbReference>
<dbReference type="InterPro" id="IPR050155">
    <property type="entry name" value="HAD-like_hydrolase_sf"/>
</dbReference>
<dbReference type="InterPro" id="IPR036412">
    <property type="entry name" value="HAD-like_sf"/>
</dbReference>
<dbReference type="InterPro" id="IPR006439">
    <property type="entry name" value="HAD-SF_hydro_IA"/>
</dbReference>
<dbReference type="InterPro" id="IPR023214">
    <property type="entry name" value="HAD_sf"/>
</dbReference>
<dbReference type="InterPro" id="IPR023198">
    <property type="entry name" value="PGP-like_dom2"/>
</dbReference>
<dbReference type="InterPro" id="IPR037512">
    <property type="entry name" value="PGPase_prok"/>
</dbReference>
<dbReference type="NCBIfam" id="TIGR01549">
    <property type="entry name" value="HAD-SF-IA-v1"/>
    <property type="match status" value="1"/>
</dbReference>
<dbReference type="NCBIfam" id="TIGR01509">
    <property type="entry name" value="HAD-SF-IA-v3"/>
    <property type="match status" value="1"/>
</dbReference>
<dbReference type="NCBIfam" id="TIGR01449">
    <property type="entry name" value="PGP_bact"/>
    <property type="match status" value="1"/>
</dbReference>
<dbReference type="NCBIfam" id="NF009694">
    <property type="entry name" value="PRK13222.1-1"/>
    <property type="match status" value="1"/>
</dbReference>
<dbReference type="NCBIfam" id="NF009695">
    <property type="entry name" value="PRK13222.1-2"/>
    <property type="match status" value="1"/>
</dbReference>
<dbReference type="NCBIfam" id="NF009697">
    <property type="entry name" value="PRK13222.1-4"/>
    <property type="match status" value="1"/>
</dbReference>
<dbReference type="PANTHER" id="PTHR43434">
    <property type="entry name" value="PHOSPHOGLYCOLATE PHOSPHATASE"/>
    <property type="match status" value="1"/>
</dbReference>
<dbReference type="PANTHER" id="PTHR43434:SF1">
    <property type="entry name" value="PHOSPHOGLYCOLATE PHOSPHATASE"/>
    <property type="match status" value="1"/>
</dbReference>
<dbReference type="Pfam" id="PF00702">
    <property type="entry name" value="Hydrolase"/>
    <property type="match status" value="1"/>
</dbReference>
<dbReference type="PRINTS" id="PR00413">
    <property type="entry name" value="HADHALOGNASE"/>
</dbReference>
<dbReference type="SFLD" id="SFLDG01135">
    <property type="entry name" value="C1.5.6:_HAD__Beta-PGM__Phospha"/>
    <property type="match status" value="1"/>
</dbReference>
<dbReference type="SFLD" id="SFLDG01129">
    <property type="entry name" value="C1.5:_HAD__Beta-PGM__Phosphata"/>
    <property type="match status" value="1"/>
</dbReference>
<dbReference type="SUPFAM" id="SSF56784">
    <property type="entry name" value="HAD-like"/>
    <property type="match status" value="1"/>
</dbReference>
<sequence>MSKFEDIRGVAFDLDGTLVDSAPGLAAAVDMALYALELPVAGEERVITWIGNGADVLMERALTWARQERATLRKTMGKPPVDDDIPAEEQVRILRKLFDRYYGEVAEEGTFLFPHVADTLGALQAKGLPLGLVTNKPTPFVAPLLEALDIAKYFSVVIGGDDVQNKKPHPDPLLLVAERMGIAPQQMLFVGDSRNDIQAAKAAGCPSVGLTYGYNYGEAIDLSQPDVIYQSINDLLPALGLPHSENQESKND</sequence>
<accession>P58422</accession>